<keyword id="KW-0025">Alternative splicing</keyword>
<keyword id="KW-0963">Cytoplasm</keyword>
<keyword id="KW-0597">Phosphoprotein</keyword>
<keyword id="KW-0675">Receptor</keyword>
<keyword id="KW-1185">Reference proteome</keyword>
<accession>Q8BI29</accession>
<accession>A2VDH0</accession>
<accession>Q4FZK7</accession>
<accession>Q8BHU5</accession>
<protein>
    <recommendedName>
        <fullName>Specifically androgen-regulated gene protein</fullName>
    </recommendedName>
</protein>
<organism>
    <name type="scientific">Mus musculus</name>
    <name type="common">Mouse</name>
    <dbReference type="NCBI Taxonomy" id="10090"/>
    <lineage>
        <taxon>Eukaryota</taxon>
        <taxon>Metazoa</taxon>
        <taxon>Chordata</taxon>
        <taxon>Craniata</taxon>
        <taxon>Vertebrata</taxon>
        <taxon>Euteleostomi</taxon>
        <taxon>Mammalia</taxon>
        <taxon>Eutheria</taxon>
        <taxon>Euarchontoglires</taxon>
        <taxon>Glires</taxon>
        <taxon>Rodentia</taxon>
        <taxon>Myomorpha</taxon>
        <taxon>Muroidea</taxon>
        <taxon>Muridae</taxon>
        <taxon>Murinae</taxon>
        <taxon>Mus</taxon>
        <taxon>Mus</taxon>
    </lineage>
</organism>
<reference key="1">
    <citation type="journal article" date="2005" name="Science">
        <title>The transcriptional landscape of the mammalian genome.</title>
        <authorList>
            <person name="Carninci P."/>
            <person name="Kasukawa T."/>
            <person name="Katayama S."/>
            <person name="Gough J."/>
            <person name="Frith M.C."/>
            <person name="Maeda N."/>
            <person name="Oyama R."/>
            <person name="Ravasi T."/>
            <person name="Lenhard B."/>
            <person name="Wells C."/>
            <person name="Kodzius R."/>
            <person name="Shimokawa K."/>
            <person name="Bajic V.B."/>
            <person name="Brenner S.E."/>
            <person name="Batalov S."/>
            <person name="Forrest A.R."/>
            <person name="Zavolan M."/>
            <person name="Davis M.J."/>
            <person name="Wilming L.G."/>
            <person name="Aidinis V."/>
            <person name="Allen J.E."/>
            <person name="Ambesi-Impiombato A."/>
            <person name="Apweiler R."/>
            <person name="Aturaliya R.N."/>
            <person name="Bailey T.L."/>
            <person name="Bansal M."/>
            <person name="Baxter L."/>
            <person name="Beisel K.W."/>
            <person name="Bersano T."/>
            <person name="Bono H."/>
            <person name="Chalk A.M."/>
            <person name="Chiu K.P."/>
            <person name="Choudhary V."/>
            <person name="Christoffels A."/>
            <person name="Clutterbuck D.R."/>
            <person name="Crowe M.L."/>
            <person name="Dalla E."/>
            <person name="Dalrymple B.P."/>
            <person name="de Bono B."/>
            <person name="Della Gatta G."/>
            <person name="di Bernardo D."/>
            <person name="Down T."/>
            <person name="Engstrom P."/>
            <person name="Fagiolini M."/>
            <person name="Faulkner G."/>
            <person name="Fletcher C.F."/>
            <person name="Fukushima T."/>
            <person name="Furuno M."/>
            <person name="Futaki S."/>
            <person name="Gariboldi M."/>
            <person name="Georgii-Hemming P."/>
            <person name="Gingeras T.R."/>
            <person name="Gojobori T."/>
            <person name="Green R.E."/>
            <person name="Gustincich S."/>
            <person name="Harbers M."/>
            <person name="Hayashi Y."/>
            <person name="Hensch T.K."/>
            <person name="Hirokawa N."/>
            <person name="Hill D."/>
            <person name="Huminiecki L."/>
            <person name="Iacono M."/>
            <person name="Ikeo K."/>
            <person name="Iwama A."/>
            <person name="Ishikawa T."/>
            <person name="Jakt M."/>
            <person name="Kanapin A."/>
            <person name="Katoh M."/>
            <person name="Kawasawa Y."/>
            <person name="Kelso J."/>
            <person name="Kitamura H."/>
            <person name="Kitano H."/>
            <person name="Kollias G."/>
            <person name="Krishnan S.P."/>
            <person name="Kruger A."/>
            <person name="Kummerfeld S.K."/>
            <person name="Kurochkin I.V."/>
            <person name="Lareau L.F."/>
            <person name="Lazarevic D."/>
            <person name="Lipovich L."/>
            <person name="Liu J."/>
            <person name="Liuni S."/>
            <person name="McWilliam S."/>
            <person name="Madan Babu M."/>
            <person name="Madera M."/>
            <person name="Marchionni L."/>
            <person name="Matsuda H."/>
            <person name="Matsuzawa S."/>
            <person name="Miki H."/>
            <person name="Mignone F."/>
            <person name="Miyake S."/>
            <person name="Morris K."/>
            <person name="Mottagui-Tabar S."/>
            <person name="Mulder N."/>
            <person name="Nakano N."/>
            <person name="Nakauchi H."/>
            <person name="Ng P."/>
            <person name="Nilsson R."/>
            <person name="Nishiguchi S."/>
            <person name="Nishikawa S."/>
            <person name="Nori F."/>
            <person name="Ohara O."/>
            <person name="Okazaki Y."/>
            <person name="Orlando V."/>
            <person name="Pang K.C."/>
            <person name="Pavan W.J."/>
            <person name="Pavesi G."/>
            <person name="Pesole G."/>
            <person name="Petrovsky N."/>
            <person name="Piazza S."/>
            <person name="Reed J."/>
            <person name="Reid J.F."/>
            <person name="Ring B.Z."/>
            <person name="Ringwald M."/>
            <person name="Rost B."/>
            <person name="Ruan Y."/>
            <person name="Salzberg S.L."/>
            <person name="Sandelin A."/>
            <person name="Schneider C."/>
            <person name="Schoenbach C."/>
            <person name="Sekiguchi K."/>
            <person name="Semple C.A."/>
            <person name="Seno S."/>
            <person name="Sessa L."/>
            <person name="Sheng Y."/>
            <person name="Shibata Y."/>
            <person name="Shimada H."/>
            <person name="Shimada K."/>
            <person name="Silva D."/>
            <person name="Sinclair B."/>
            <person name="Sperling S."/>
            <person name="Stupka E."/>
            <person name="Sugiura K."/>
            <person name="Sultana R."/>
            <person name="Takenaka Y."/>
            <person name="Taki K."/>
            <person name="Tammoja K."/>
            <person name="Tan S.L."/>
            <person name="Tang S."/>
            <person name="Taylor M.S."/>
            <person name="Tegner J."/>
            <person name="Teichmann S.A."/>
            <person name="Ueda H.R."/>
            <person name="van Nimwegen E."/>
            <person name="Verardo R."/>
            <person name="Wei C.L."/>
            <person name="Yagi K."/>
            <person name="Yamanishi H."/>
            <person name="Zabarovsky E."/>
            <person name="Zhu S."/>
            <person name="Zimmer A."/>
            <person name="Hide W."/>
            <person name="Bult C."/>
            <person name="Grimmond S.M."/>
            <person name="Teasdale R.D."/>
            <person name="Liu E.T."/>
            <person name="Brusic V."/>
            <person name="Quackenbush J."/>
            <person name="Wahlestedt C."/>
            <person name="Mattick J.S."/>
            <person name="Hume D.A."/>
            <person name="Kai C."/>
            <person name="Sasaki D."/>
            <person name="Tomaru Y."/>
            <person name="Fukuda S."/>
            <person name="Kanamori-Katayama M."/>
            <person name="Suzuki M."/>
            <person name="Aoki J."/>
            <person name="Arakawa T."/>
            <person name="Iida J."/>
            <person name="Imamura K."/>
            <person name="Itoh M."/>
            <person name="Kato T."/>
            <person name="Kawaji H."/>
            <person name="Kawagashira N."/>
            <person name="Kawashima T."/>
            <person name="Kojima M."/>
            <person name="Kondo S."/>
            <person name="Konno H."/>
            <person name="Nakano K."/>
            <person name="Ninomiya N."/>
            <person name="Nishio T."/>
            <person name="Okada M."/>
            <person name="Plessy C."/>
            <person name="Shibata K."/>
            <person name="Shiraki T."/>
            <person name="Suzuki S."/>
            <person name="Tagami M."/>
            <person name="Waki K."/>
            <person name="Watahiki A."/>
            <person name="Okamura-Oho Y."/>
            <person name="Suzuki H."/>
            <person name="Kawai J."/>
            <person name="Hayashizaki Y."/>
        </authorList>
    </citation>
    <scope>NUCLEOTIDE SEQUENCE [LARGE SCALE MRNA] (ISOFORMS 1 AND 2)</scope>
    <source>
        <strain>C57BL/6J</strain>
        <tissue>Skin</tissue>
        <tissue>Stomach</tissue>
    </source>
</reference>
<reference key="2">
    <citation type="journal article" date="2004" name="Genome Res.">
        <title>The status, quality, and expansion of the NIH full-length cDNA project: the Mammalian Gene Collection (MGC).</title>
        <authorList>
            <consortium name="The MGC Project Team"/>
        </authorList>
    </citation>
    <scope>NUCLEOTIDE SEQUENCE [LARGE SCALE MRNA] (ISOFORM 2)</scope>
    <source>
        <tissue>Placenta</tissue>
    </source>
</reference>
<reference key="3">
    <citation type="journal article" date="2010" name="Cell">
        <title>A tissue-specific atlas of mouse protein phosphorylation and expression.</title>
        <authorList>
            <person name="Huttlin E.L."/>
            <person name="Jedrychowski M.P."/>
            <person name="Elias J.E."/>
            <person name="Goswami T."/>
            <person name="Rad R."/>
            <person name="Beausoleil S.A."/>
            <person name="Villen J."/>
            <person name="Haas W."/>
            <person name="Sowa M.E."/>
            <person name="Gygi S.P."/>
        </authorList>
    </citation>
    <scope>PHOSPHORYLATION [LARGE SCALE ANALYSIS] AT THR-334; SER-397; SER-412 AND SER-524</scope>
    <scope>IDENTIFICATION BY MASS SPECTROMETRY [LARGE SCALE ANALYSIS]</scope>
    <source>
        <tissue>Brown adipose tissue</tissue>
        <tissue>Kidney</tissue>
        <tissue>Lung</tissue>
        <tissue>Spleen</tissue>
    </source>
</reference>
<gene>
    <name type="primary">Sarg</name>
</gene>
<name>SARG_MOUSE</name>
<feature type="chain" id="PRO_0000318576" description="Specifically androgen-regulated gene protein">
    <location>
        <begin position="1"/>
        <end position="606"/>
    </location>
</feature>
<feature type="region of interest" description="Disordered" evidence="3">
    <location>
        <begin position="64"/>
        <end position="488"/>
    </location>
</feature>
<feature type="region of interest" description="Disordered" evidence="3">
    <location>
        <begin position="500"/>
        <end position="543"/>
    </location>
</feature>
<feature type="region of interest" description="Disordered" evidence="3">
    <location>
        <begin position="555"/>
        <end position="574"/>
    </location>
</feature>
<feature type="compositionally biased region" description="Polar residues" evidence="3">
    <location>
        <begin position="68"/>
        <end position="81"/>
    </location>
</feature>
<feature type="compositionally biased region" description="Polar residues" evidence="3">
    <location>
        <begin position="141"/>
        <end position="157"/>
    </location>
</feature>
<feature type="compositionally biased region" description="Basic and acidic residues" evidence="3">
    <location>
        <begin position="206"/>
        <end position="224"/>
    </location>
</feature>
<feature type="compositionally biased region" description="Basic and acidic residues" evidence="3">
    <location>
        <begin position="233"/>
        <end position="260"/>
    </location>
</feature>
<feature type="compositionally biased region" description="Low complexity" evidence="3">
    <location>
        <begin position="265"/>
        <end position="277"/>
    </location>
</feature>
<feature type="compositionally biased region" description="Polar residues" evidence="3">
    <location>
        <begin position="312"/>
        <end position="331"/>
    </location>
</feature>
<feature type="compositionally biased region" description="Basic and acidic residues" evidence="3">
    <location>
        <begin position="344"/>
        <end position="354"/>
    </location>
</feature>
<feature type="compositionally biased region" description="Low complexity" evidence="3">
    <location>
        <begin position="381"/>
        <end position="399"/>
    </location>
</feature>
<feature type="compositionally biased region" description="Basic and acidic residues" evidence="3">
    <location>
        <begin position="451"/>
        <end position="465"/>
    </location>
</feature>
<feature type="compositionally biased region" description="Polar residues" evidence="3">
    <location>
        <begin position="558"/>
        <end position="568"/>
    </location>
</feature>
<feature type="modified residue" description="Phosphoserine" evidence="2">
    <location>
        <position position="130"/>
    </location>
</feature>
<feature type="modified residue" description="Phosphoserine" evidence="2">
    <location>
        <position position="132"/>
    </location>
</feature>
<feature type="modified residue" description="Phosphothreonine" evidence="7">
    <location>
        <position position="334"/>
    </location>
</feature>
<feature type="modified residue" description="Phosphoserine" evidence="7">
    <location>
        <position position="397"/>
    </location>
</feature>
<feature type="modified residue" description="Phosphoserine" evidence="7">
    <location>
        <position position="412"/>
    </location>
</feature>
<feature type="modified residue" description="Phosphoserine" evidence="7">
    <location>
        <position position="524"/>
    </location>
</feature>
<feature type="splice variant" id="VSP_031229" description="In isoform 2." evidence="4 5">
    <location>
        <begin position="1"/>
        <end position="245"/>
    </location>
</feature>
<feature type="sequence conflict" description="In Ref. 2; AAI29961." evidence="6" ref="2">
    <original>L</original>
    <variation>P</variation>
    <location>
        <position position="264"/>
    </location>
</feature>
<feature type="sequence conflict" description="In Ref. 2; AAI29961." evidence="6" ref="2">
    <original>Q</original>
    <variation>E</variation>
    <location>
        <position position="266"/>
    </location>
</feature>
<feature type="sequence conflict" description="In Ref. 2; AAI29961." evidence="6" ref="2">
    <original>S</original>
    <variation>N</variation>
    <location>
        <position position="292"/>
    </location>
</feature>
<feature type="sequence conflict" description="In Ref. 2; AAI29961." evidence="6" ref="2">
    <original>A</original>
    <variation>T</variation>
    <location>
        <position position="381"/>
    </location>
</feature>
<feature type="sequence conflict" description="In Ref. 2; AAI29961." evidence="6" ref="2">
    <original>K</original>
    <variation>M</variation>
    <location>
        <position position="414"/>
    </location>
</feature>
<feature type="sequence conflict" description="In Ref. 2; AAI29961." evidence="6" ref="2">
    <original>S</original>
    <variation>N</variation>
    <location>
        <position position="424"/>
    </location>
</feature>
<feature type="sequence conflict" description="In Ref. 2; AAI29961." evidence="6" ref="2">
    <original>L</original>
    <variation>S</variation>
    <location>
        <position position="452"/>
    </location>
</feature>
<feature type="sequence conflict" description="In Ref. 2; AAI29961." evidence="6" ref="2">
    <original>R</original>
    <variation>Q</variation>
    <location>
        <position position="458"/>
    </location>
</feature>
<feature type="sequence conflict" description="In Ref. 2; AAI29961." evidence="6" ref="2">
    <original>V</original>
    <variation>I</variation>
    <location>
        <position position="492"/>
    </location>
</feature>
<feature type="sequence conflict" description="In Ref. 1; BAC39393." evidence="6" ref="1">
    <original>G</original>
    <variation>R</variation>
    <location>
        <position position="515"/>
    </location>
</feature>
<feature type="sequence conflict" description="In Ref. 2; AAI29961." evidence="6" ref="2">
    <original>S</original>
    <variation>G</variation>
    <location>
        <position position="517"/>
    </location>
</feature>
<feature type="sequence conflict" description="In Ref. 1; BAC26213." evidence="6" ref="1">
    <original>C</original>
    <variation>F</variation>
    <location>
        <position position="560"/>
    </location>
</feature>
<dbReference type="EMBL" id="AK028957">
    <property type="protein sequence ID" value="BAC26213.1"/>
    <property type="molecule type" value="mRNA"/>
</dbReference>
<dbReference type="EMBL" id="AK085225">
    <property type="protein sequence ID" value="BAC39393.1"/>
    <property type="molecule type" value="mRNA"/>
</dbReference>
<dbReference type="EMBL" id="BC099401">
    <property type="protein sequence ID" value="AAH99401.1"/>
    <property type="molecule type" value="mRNA"/>
</dbReference>
<dbReference type="EMBL" id="BC117765">
    <property type="protein sequence ID" value="AAI17766.1"/>
    <property type="molecule type" value="mRNA"/>
</dbReference>
<dbReference type="EMBL" id="BC117766">
    <property type="protein sequence ID" value="AAI17767.1"/>
    <property type="molecule type" value="mRNA"/>
</dbReference>
<dbReference type="EMBL" id="BC129960">
    <property type="protein sequence ID" value="AAI29961.1"/>
    <property type="molecule type" value="mRNA"/>
</dbReference>
<dbReference type="CCDS" id="CCDS48352.1">
    <molecule id="Q8BI29-1"/>
</dbReference>
<dbReference type="RefSeq" id="NP_808272.2">
    <molecule id="Q8BI29-1"/>
    <property type="nucleotide sequence ID" value="NM_177604.3"/>
</dbReference>
<dbReference type="RefSeq" id="XP_017175106.1">
    <property type="nucleotide sequence ID" value="XM_017319617.1"/>
</dbReference>
<dbReference type="FunCoup" id="Q8BI29">
    <property type="interactions" value="494"/>
</dbReference>
<dbReference type="STRING" id="10090.ENSMUSP00000046172"/>
<dbReference type="iPTMnet" id="Q8BI29"/>
<dbReference type="PhosphoSitePlus" id="Q8BI29"/>
<dbReference type="PaxDb" id="10090-ENSMUSP00000046172"/>
<dbReference type="PeptideAtlas" id="Q8BI29"/>
<dbReference type="ProteomicsDB" id="256835">
    <molecule id="Q8BI29-1"/>
</dbReference>
<dbReference type="ProteomicsDB" id="256836">
    <molecule id="Q8BI29-2"/>
</dbReference>
<dbReference type="Antibodypedia" id="1991">
    <property type="antibodies" value="66 antibodies from 19 providers"/>
</dbReference>
<dbReference type="DNASU" id="212439"/>
<dbReference type="Ensembl" id="ENSMUST00000039323.8">
    <molecule id="Q8BI29-1"/>
    <property type="protein sequence ID" value="ENSMUSP00000046172.7"/>
    <property type="gene ID" value="ENSMUSG00000042510.8"/>
</dbReference>
<dbReference type="GeneID" id="212439"/>
<dbReference type="KEGG" id="mmu:212439"/>
<dbReference type="UCSC" id="uc007cmi.2">
    <molecule id="Q8BI29-1"/>
    <property type="organism name" value="mouse"/>
</dbReference>
<dbReference type="AGR" id="MGI:2138143"/>
<dbReference type="MGI" id="MGI:2138143">
    <property type="gene designation" value="AA986860"/>
</dbReference>
<dbReference type="VEuPathDB" id="HostDB:ENSMUSG00000042510"/>
<dbReference type="eggNOG" id="ENOG502RGW5">
    <property type="taxonomic scope" value="Eukaryota"/>
</dbReference>
<dbReference type="GeneTree" id="ENSGT00390000017874"/>
<dbReference type="HOGENOM" id="CLU_035136_0_0_1"/>
<dbReference type="InParanoid" id="Q8BI29"/>
<dbReference type="OMA" id="HSEPQSW"/>
<dbReference type="OrthoDB" id="9898538at2759"/>
<dbReference type="PhylomeDB" id="Q8BI29"/>
<dbReference type="TreeFam" id="TF336615"/>
<dbReference type="BioGRID-ORCS" id="212439">
    <property type="hits" value="2 hits in 76 CRISPR screens"/>
</dbReference>
<dbReference type="PRO" id="PR:Q8BI29"/>
<dbReference type="Proteomes" id="UP000000589">
    <property type="component" value="Chromosome 1"/>
</dbReference>
<dbReference type="RNAct" id="Q8BI29">
    <property type="molecule type" value="protein"/>
</dbReference>
<dbReference type="Bgee" id="ENSMUSG00000042510">
    <property type="expression patterns" value="Expressed in epithelium of small intestine and 137 other cell types or tissues"/>
</dbReference>
<dbReference type="GO" id="GO:0005829">
    <property type="term" value="C:cytosol"/>
    <property type="evidence" value="ECO:0007669"/>
    <property type="project" value="Ensembl"/>
</dbReference>
<dbReference type="GO" id="GO:0005886">
    <property type="term" value="C:plasma membrane"/>
    <property type="evidence" value="ECO:0007669"/>
    <property type="project" value="Ensembl"/>
</dbReference>
<dbReference type="InterPro" id="IPR026152">
    <property type="entry name" value="SARG"/>
</dbReference>
<dbReference type="PANTHER" id="PTHR21555">
    <property type="entry name" value="SPECIFICALLY ANDROGEN-REGULATED GENE PROTEIN"/>
    <property type="match status" value="1"/>
</dbReference>
<dbReference type="PANTHER" id="PTHR21555:SF0">
    <property type="entry name" value="SPECIFICALLY ANDROGEN-REGULATED GENE PROTEIN"/>
    <property type="match status" value="1"/>
</dbReference>
<dbReference type="Pfam" id="PF15385">
    <property type="entry name" value="SARG"/>
    <property type="match status" value="1"/>
</dbReference>
<comment type="function">
    <text evidence="1">Putative androgen-specific receptor.</text>
</comment>
<comment type="subcellular location">
    <subcellularLocation>
        <location evidence="1">Cytoplasm</location>
    </subcellularLocation>
</comment>
<comment type="alternative products">
    <event type="alternative splicing"/>
    <isoform>
        <id>Q8BI29-1</id>
        <name>1</name>
        <sequence type="displayed"/>
    </isoform>
    <isoform>
        <id>Q8BI29-2</id>
        <name>2</name>
        <sequence type="described" ref="VSP_031229"/>
    </isoform>
</comment>
<comment type="similarity">
    <text evidence="6">Belongs to the SARG family.</text>
</comment>
<sequence length="606" mass="65092">MPKRELWPAGLCSEPVTHIGSCGDMMSTTSTRSGSSDSSYDFLSAEEKECLLFLEKTIGSLEAEADSGLSTDESEPATSPRSFRALPTATQQAPQGKPEATDIQQVPVPKRVAQPSCPPESHSLGLRAGSYSLPRNLHLGRSQNLRESATQANSPVSEASEVFLEEPEKGQTSQGAKAKTIQPPAPSQKGTLDLSTVLIPPPEAFQDIRPKESGEESPPKKPGEQTHTPQVHSLERSPHSQKKVEMSSETVSHKATEKGWTEGLQQPQQPPAQSSQPTKAEELSLPSGVKPSIQQTPLTASKARKLPPNIVLKSSRSSFHSHPQNWLSNHTEATDSGPVSSLQEQRKARREALEKLGLPQDQDDPSLLVNKHTSTLKVREAQPQTPSQARAPARPASPALVSGTASAAGKVSPKKAVAPMDSLSKGWIPTQETPPGKVAEAKSMPIPIPKTLKENSSRTQPKPDPRLTLQESSIPGLRQMNFKSNTLERSGVGLSSYLSAAEKKDPSCQTSTSLGKSPFLDKVSPSAFRNSRPRPASLGMGKDFAGIQGGKLVGLEQDQCSQQPSFKGQSYDKLPRPPCISVKISPKGIPDGHRREALKKLGLLKE</sequence>
<evidence type="ECO:0000250" key="1"/>
<evidence type="ECO:0000250" key="2">
    <source>
        <dbReference type="UniProtKB" id="Q9BW04"/>
    </source>
</evidence>
<evidence type="ECO:0000256" key="3">
    <source>
        <dbReference type="SAM" id="MobiDB-lite"/>
    </source>
</evidence>
<evidence type="ECO:0000303" key="4">
    <source>
    </source>
</evidence>
<evidence type="ECO:0000303" key="5">
    <source>
    </source>
</evidence>
<evidence type="ECO:0000305" key="6"/>
<evidence type="ECO:0007744" key="7">
    <source>
    </source>
</evidence>
<proteinExistence type="evidence at protein level"/>